<sequence>MQLVLAAKYIGAAIATIGLTGAGIGIAIVFAALINGTSRNPSLRNTLFPFAILGFALSEATGLFCLMISFLLLYGV</sequence>
<keyword id="KW-0002">3D-structure</keyword>
<keyword id="KW-0066">ATP synthesis</keyword>
<keyword id="KW-0138">CF(0)</keyword>
<keyword id="KW-0903">Direct protein sequencing</keyword>
<keyword id="KW-0291">Formylation</keyword>
<keyword id="KW-0375">Hydrogen ion transport</keyword>
<keyword id="KW-0406">Ion transport</keyword>
<keyword id="KW-0446">Lipid-binding</keyword>
<keyword id="KW-0472">Membrane</keyword>
<keyword id="KW-0496">Mitochondrion</keyword>
<keyword id="KW-0999">Mitochondrion inner membrane</keyword>
<keyword id="KW-0812">Transmembrane</keyword>
<keyword id="KW-1133">Transmembrane helix</keyword>
<keyword id="KW-0813">Transport</keyword>
<gene>
    <name evidence="1" type="primary">OLI1</name>
    <name evidence="1" type="synonym">ATP9</name>
</gene>
<protein>
    <recommendedName>
        <fullName evidence="1">ATP synthase subunit 9, mitochondrial</fullName>
    </recommendedName>
    <alternativeName>
        <fullName evidence="7">ATP synthase subunit c</fullName>
    </alternativeName>
    <alternativeName>
        <fullName evidence="1">Lipid-binding protein</fullName>
    </alternativeName>
</protein>
<dbReference type="PDB" id="5LQX">
    <property type="method" value="EM"/>
    <property type="resolution" value="7.90 A"/>
    <property type="chains" value="K/L/M/N/O/P/Q/R/S/T=1-76"/>
</dbReference>
<dbReference type="PDB" id="5LQY">
    <property type="method" value="EM"/>
    <property type="resolution" value="7.80 A"/>
    <property type="chains" value="K/L/M/N/O/P/Q/R/S/T=1-76"/>
</dbReference>
<dbReference type="PDB" id="5LQZ">
    <property type="method" value="EM"/>
    <property type="resolution" value="7.00 A"/>
    <property type="chains" value="K/L/M/N/O/P/Q/R/S/T=1-76"/>
</dbReference>
<dbReference type="PDBsum" id="5LQX"/>
<dbReference type="PDBsum" id="5LQY"/>
<dbReference type="PDBsum" id="5LQZ"/>
<dbReference type="EMDB" id="EMD-4100"/>
<dbReference type="EMDB" id="EMD-4101"/>
<dbReference type="EMDB" id="EMD-4102"/>
<dbReference type="SMR" id="C0HK59"/>
<dbReference type="GO" id="GO:0005743">
    <property type="term" value="C:mitochondrial inner membrane"/>
    <property type="evidence" value="ECO:0007669"/>
    <property type="project" value="UniProtKB-SubCell"/>
</dbReference>
<dbReference type="GO" id="GO:0045259">
    <property type="term" value="C:proton-transporting ATP synthase complex"/>
    <property type="evidence" value="ECO:0007669"/>
    <property type="project" value="UniProtKB-KW"/>
</dbReference>
<dbReference type="GO" id="GO:0033177">
    <property type="term" value="C:proton-transporting two-sector ATPase complex, proton-transporting domain"/>
    <property type="evidence" value="ECO:0007669"/>
    <property type="project" value="InterPro"/>
</dbReference>
<dbReference type="GO" id="GO:0008289">
    <property type="term" value="F:lipid binding"/>
    <property type="evidence" value="ECO:0007669"/>
    <property type="project" value="UniProtKB-KW"/>
</dbReference>
<dbReference type="GO" id="GO:0015078">
    <property type="term" value="F:proton transmembrane transporter activity"/>
    <property type="evidence" value="ECO:0007669"/>
    <property type="project" value="InterPro"/>
</dbReference>
<dbReference type="GO" id="GO:0015986">
    <property type="term" value="P:proton motive force-driven ATP synthesis"/>
    <property type="evidence" value="ECO:0007669"/>
    <property type="project" value="InterPro"/>
</dbReference>
<dbReference type="CDD" id="cd18182">
    <property type="entry name" value="ATP-synt_Fo_c_ATP5G3"/>
    <property type="match status" value="1"/>
</dbReference>
<dbReference type="FunFam" id="1.20.20.10:FF:000003">
    <property type="entry name" value="Atp synthase f complex subunit mitochondrial"/>
    <property type="match status" value="1"/>
</dbReference>
<dbReference type="Gene3D" id="1.20.20.10">
    <property type="entry name" value="F1F0 ATP synthase subunit C"/>
    <property type="match status" value="1"/>
</dbReference>
<dbReference type="HAMAP" id="MF_01396">
    <property type="entry name" value="ATP_synth_c_bact"/>
    <property type="match status" value="1"/>
</dbReference>
<dbReference type="InterPro" id="IPR000454">
    <property type="entry name" value="ATP_synth_F0_csu"/>
</dbReference>
<dbReference type="InterPro" id="IPR020537">
    <property type="entry name" value="ATP_synth_F0_csu_DDCD_BS"/>
</dbReference>
<dbReference type="InterPro" id="IPR038662">
    <property type="entry name" value="ATP_synth_F0_csu_sf"/>
</dbReference>
<dbReference type="InterPro" id="IPR002379">
    <property type="entry name" value="ATPase_proteolipid_c-like_dom"/>
</dbReference>
<dbReference type="InterPro" id="IPR035921">
    <property type="entry name" value="F/V-ATP_Csub_sf"/>
</dbReference>
<dbReference type="PANTHER" id="PTHR10031">
    <property type="entry name" value="ATP SYNTHASE LIPID-BINDING PROTEIN, MITOCHONDRIAL"/>
    <property type="match status" value="1"/>
</dbReference>
<dbReference type="PANTHER" id="PTHR10031:SF0">
    <property type="entry name" value="ATPASE PROTEIN 9"/>
    <property type="match status" value="1"/>
</dbReference>
<dbReference type="Pfam" id="PF00137">
    <property type="entry name" value="ATP-synt_C"/>
    <property type="match status" value="1"/>
</dbReference>
<dbReference type="PRINTS" id="PR00124">
    <property type="entry name" value="ATPASEC"/>
</dbReference>
<dbReference type="SUPFAM" id="SSF81333">
    <property type="entry name" value="F1F0 ATP synthase subunit C"/>
    <property type="match status" value="1"/>
</dbReference>
<dbReference type="PROSITE" id="PS00605">
    <property type="entry name" value="ATPASE_C"/>
    <property type="match status" value="1"/>
</dbReference>
<accession>C0HK59</accession>
<name>ATP9_PICAN</name>
<comment type="function">
    <text evidence="2 4 5">Mitochondrial membrane ATP synthase (F(1)F(0) ATP synthase or Complex V) produces ATP from ADP in the presence of a proton gradient across the membrane which is generated by electron transport complexes of the respiratory chain (PubMed:25759169). F-type ATP synthases consist of two structural domains, F(1) - containing the extramembraneous catalytic core, and F(0) - containing the membrane proton channel, linked together by a central stalk and a peripheral stalk (PubMed:27791192). During catalysis, ATP synthesis in the catalytic domain of F(1) is coupled via a rotary mechanism of the central stalk subunits to proton translocation (By similarity). Part of the complex F(0) domain (PubMed:27791192). A homomeric c-ring of 10 OLI1/ATP9 subunits is part of the complex rotary element (PubMed:27791192).</text>
</comment>
<comment type="subunit">
    <text evidence="2 4 5">F-type ATP synthases have 2 components, the catalytic core F(1) and the membrane-embedded component F(0), linked together by a central stalk and a peripheral stalk (PubMed:27791192). The central stalk, also called rotor shaft, is often seen as part of F(1) (PubMed:27791192). The peripheral stalk is seen as part of F(0). F(0) contains the membrane channel next to the rotor (PubMed:27791192). F-type ATP synthases form dimers but each monomer functions independently in ATP generation (By similarity). The dimer consists of 18 different polypeptides: ATP1 (subunit alpha, part of F(1), 3 molecules per monomer), ATP2 (subunit beta, part of F(1), 3 molecules per monomer), ATP3 (subunit gamma, part of the central stalk), ATP4 (subunit b, part of the peripheral stalk), ATP5/OSCP (subunit 5/OSCP, part of the peripheral stalk), ATP6 (subunit a, part of the peripheral stalk), ATP7 (subunit d, part of the peripheral stalk), ATP8 (subunit 8, part of the peripheral stalk), OLI1 (subunit c, part of the rotor, 10 molecules per monomer), ATP14 (subunit h, part of the peripheral stalk), ATP15 (subunit epsilon, part of the central stalk), ATP16 (subunit delta, part of the central stalk), ATP17 (subunit f, part of the peripheral stalk), ATP18 (subunit i/j, part of the peripheral stalk) (PubMed:25759169, PubMed:27791192). Dimer-specific subunits are ATP19 (subunit k, at interface between monomers), ATP20 (subunit g, at interface between monomers), TIM11 (subunit e, at interface between monomers) (By similarity). Also contains subunit L (PubMed:25759169).</text>
</comment>
<comment type="subcellular location">
    <subcellularLocation>
        <location evidence="10">Mitochondrion inner membrane</location>
        <topology evidence="3">Multi-pass membrane protein</topology>
    </subcellularLocation>
    <text evidence="10">The F-type ATP synthase complex is anchored in the mitochondrial inner membrane via the F(0) domain with the F(1) domain and the peripheral stalk extending into the mitochondrial matrix.</text>
</comment>
<comment type="mass spectrometry"/>
<comment type="similarity">
    <text evidence="9">Belongs to the ATPase C chain family.</text>
</comment>
<evidence type="ECO:0000250" key="1">
    <source>
        <dbReference type="UniProtKB" id="P61829"/>
    </source>
</evidence>
<evidence type="ECO:0000250" key="2">
    <source>
        <dbReference type="UniProtKB" id="Q37695"/>
    </source>
</evidence>
<evidence type="ECO:0000255" key="3"/>
<evidence type="ECO:0000269" key="4">
    <source>
    </source>
</evidence>
<evidence type="ECO:0000269" key="5">
    <source>
    </source>
</evidence>
<evidence type="ECO:0000269" key="6">
    <source ref="1"/>
</evidence>
<evidence type="ECO:0000303" key="7">
    <source>
    </source>
</evidence>
<evidence type="ECO:0000303" key="8">
    <source ref="1"/>
</evidence>
<evidence type="ECO:0000305" key="9"/>
<evidence type="ECO:0000305" key="10">
    <source>
    </source>
</evidence>
<evidence type="ECO:0007744" key="11">
    <source>
        <dbReference type="PDB" id="5LQX"/>
    </source>
</evidence>
<evidence type="ECO:0007744" key="12">
    <source>
        <dbReference type="PDB" id="5LQY"/>
    </source>
</evidence>
<evidence type="ECO:0007744" key="13">
    <source>
        <dbReference type="PDB" id="5LQZ"/>
    </source>
</evidence>
<organism evidence="7">
    <name type="scientific">Pichia angusta</name>
    <name type="common">Yeast</name>
    <name type="synonym">Hansenula polymorpha</name>
    <dbReference type="NCBI Taxonomy" id="870730"/>
    <lineage>
        <taxon>Eukaryota</taxon>
        <taxon>Fungi</taxon>
        <taxon>Dikarya</taxon>
        <taxon>Ascomycota</taxon>
        <taxon>Saccharomycotina</taxon>
        <taxon>Pichiomycetes</taxon>
        <taxon>Pichiales</taxon>
        <taxon>Pichiaceae</taxon>
        <taxon>Ogataea</taxon>
    </lineage>
</organism>
<reference evidence="9" key="1">
    <citation type="submission" date="2016-08" db="UniProtKB">
        <authorList>
            <person name="Fearnley I.M."/>
        </authorList>
    </citation>
    <scope>PARTIAL PROTEIN SEQUENCE</scope>
    <source>
        <strain evidence="8">A16 / NCYC 2310</strain>
    </source>
</reference>
<reference evidence="9" key="2">
    <citation type="journal article" date="2015" name="Biochem. J.">
        <title>The purification and characterization of ATP synthase complexes from the mitochondria of four fungal species.</title>
        <authorList>
            <person name="Liu S."/>
            <person name="Charlesworth T.J."/>
            <person name="Bason J.V."/>
            <person name="Montgomery M.G."/>
            <person name="Harbour M.E."/>
            <person name="Fearnley I.M."/>
            <person name="Walker J.E."/>
        </authorList>
    </citation>
    <scope>PROTEIN SEQUENCE OF 1-9</scope>
    <scope>IDENTIFICATION IN ATP SYNTHASE COMPLEX</scope>
    <scope>FUNCTION OF ATPASE COMPLEX</scope>
    <scope>SUBUNIT</scope>
    <scope>SUBCELLULAR LOCATION</scope>
    <scope>MASS SPECTROMETRY</scope>
    <scope>IDENTIFICATION BY MASS SPECTROMETRY</scope>
    <scope>FORMYLATION AT MET-1</scope>
    <source>
        <strain evidence="7">A16 / NCYC 2310</strain>
    </source>
</reference>
<reference evidence="11 12 13" key="3">
    <citation type="journal article" date="2016" name="Proc. Natl. Acad. Sci. U.S.A.">
        <title>Structure of the mitochondrial ATP synthase from Pichia angusta determined by electron cryo-microscopy.</title>
        <authorList>
            <person name="Vinothkumar K.R."/>
            <person name="Montgomery M.G."/>
            <person name="Liu S."/>
            <person name="Walker J.E."/>
        </authorList>
    </citation>
    <scope>STRUCTURE BY ELECTRON MICROSCOPY (7.0 ANGSTROMS) OF MONOMERIC ATP SYNTHASE COMPLEX IN COMPLEX WITH BOVINE ATPIF1</scope>
    <scope>FUNCTION</scope>
    <scope>SUBUNIT</scope>
    <scope>SUBCELLULAR LOCATION</scope>
</reference>
<proteinExistence type="evidence at protein level"/>
<feature type="chain" id="PRO_0000445334" description="ATP synthase subunit 9, mitochondrial" evidence="6">
    <location>
        <begin position="1"/>
        <end position="76"/>
    </location>
</feature>
<feature type="transmembrane region" description="Helical" evidence="3">
    <location>
        <begin position="14"/>
        <end position="34"/>
    </location>
</feature>
<feature type="transmembrane region" description="Helical" evidence="3">
    <location>
        <begin position="52"/>
        <end position="72"/>
    </location>
</feature>
<feature type="site" description="Reversibly protonated during proton transport" evidence="10">
    <location>
        <position position="59"/>
    </location>
</feature>
<feature type="modified residue" description="N-formylmethionine" evidence="4">
    <location>
        <position position="1"/>
    </location>
</feature>